<sequence length="304" mass="34397">MTKKILILSGGISKERLISLDTGKQVAKELIKNGYKVLISEPDKNLSKNITSFKPDVIFNALHGQFGEDGYIQAILETKKIPYTHSGVIASSIAMDKEISKKIFIKNKILTPKYIKFNHKKNKLNIIKLIEKNLKFPVVVKPINEGSSVHVYICDKTNILKNLKVLKSYNEILIEEFIPGREIQVAIMNNKSLGAIELEPRRKFYDYEAKYNSSAKTKHLIPVDLSKNNLAKITGIARAAHKIIGCKGVTRSDFKFFNGKFYLLEINTQPGMTKLSLVPEIAKHKGISFIKLIEWILKDASINR</sequence>
<protein>
    <recommendedName>
        <fullName evidence="2">D-alanine--D-alanine ligase</fullName>
        <ecNumber evidence="2">6.3.2.4</ecNumber>
    </recommendedName>
    <alternativeName>
        <fullName evidence="2">D-Ala-D-Ala ligase</fullName>
    </alternativeName>
    <alternativeName>
        <fullName evidence="2">D-alanylalanine synthetase</fullName>
    </alternativeName>
</protein>
<comment type="function">
    <text evidence="2">Cell wall formation.</text>
</comment>
<comment type="catalytic activity">
    <reaction evidence="2">
        <text>2 D-alanine + ATP = D-alanyl-D-alanine + ADP + phosphate + H(+)</text>
        <dbReference type="Rhea" id="RHEA:11224"/>
        <dbReference type="ChEBI" id="CHEBI:15378"/>
        <dbReference type="ChEBI" id="CHEBI:30616"/>
        <dbReference type="ChEBI" id="CHEBI:43474"/>
        <dbReference type="ChEBI" id="CHEBI:57416"/>
        <dbReference type="ChEBI" id="CHEBI:57822"/>
        <dbReference type="ChEBI" id="CHEBI:456216"/>
        <dbReference type="EC" id="6.3.2.4"/>
    </reaction>
</comment>
<comment type="cofactor">
    <cofactor evidence="1">
        <name>Mg(2+)</name>
        <dbReference type="ChEBI" id="CHEBI:18420"/>
    </cofactor>
    <cofactor evidence="1">
        <name>Mn(2+)</name>
        <dbReference type="ChEBI" id="CHEBI:29035"/>
    </cofactor>
    <text evidence="1">Binds 2 magnesium or manganese ions per subunit.</text>
</comment>
<comment type="pathway">
    <text evidence="2">Cell wall biogenesis; peptidoglycan biosynthesis.</text>
</comment>
<comment type="subcellular location">
    <subcellularLocation>
        <location evidence="2">Cytoplasm</location>
    </subcellularLocation>
</comment>
<comment type="similarity">
    <text evidence="2">Belongs to the D-alanine--D-alanine ligase family.</text>
</comment>
<organism>
    <name type="scientific">Pelagibacter ubique (strain HTCC1062)</name>
    <dbReference type="NCBI Taxonomy" id="335992"/>
    <lineage>
        <taxon>Bacteria</taxon>
        <taxon>Pseudomonadati</taxon>
        <taxon>Pseudomonadota</taxon>
        <taxon>Alphaproteobacteria</taxon>
        <taxon>Candidatus Pelagibacterales</taxon>
        <taxon>Candidatus Pelagibacteraceae</taxon>
        <taxon>Candidatus Pelagibacter</taxon>
    </lineage>
</organism>
<reference key="1">
    <citation type="journal article" date="2005" name="Science">
        <title>Genome streamlining in a cosmopolitan oceanic bacterium.</title>
        <authorList>
            <person name="Giovannoni S.J."/>
            <person name="Tripp H.J."/>
            <person name="Givan S."/>
            <person name="Podar M."/>
            <person name="Vergin K.L."/>
            <person name="Baptista D."/>
            <person name="Bibbs L."/>
            <person name="Eads J."/>
            <person name="Richardson T.H."/>
            <person name="Noordewier M."/>
            <person name="Rappe M.S."/>
            <person name="Short J.M."/>
            <person name="Carrington J.C."/>
            <person name="Mathur E.J."/>
        </authorList>
    </citation>
    <scope>NUCLEOTIDE SEQUENCE [LARGE SCALE GENOMIC DNA]</scope>
    <source>
        <strain>HTCC1062</strain>
    </source>
</reference>
<feature type="chain" id="PRO_0000341145" description="D-alanine--D-alanine ligase">
    <location>
        <begin position="1"/>
        <end position="304"/>
    </location>
</feature>
<feature type="domain" description="ATP-grasp" evidence="2">
    <location>
        <begin position="101"/>
        <end position="298"/>
    </location>
</feature>
<feature type="binding site" evidence="2">
    <location>
        <begin position="131"/>
        <end position="184"/>
    </location>
    <ligand>
        <name>ATP</name>
        <dbReference type="ChEBI" id="CHEBI:30616"/>
    </ligand>
</feature>
<feature type="binding site" evidence="2">
    <location>
        <position position="253"/>
    </location>
    <ligand>
        <name>Mg(2+)</name>
        <dbReference type="ChEBI" id="CHEBI:18420"/>
        <label>1</label>
    </ligand>
</feature>
<feature type="binding site" evidence="2">
    <location>
        <position position="265"/>
    </location>
    <ligand>
        <name>Mg(2+)</name>
        <dbReference type="ChEBI" id="CHEBI:18420"/>
        <label>1</label>
    </ligand>
</feature>
<feature type="binding site" evidence="2">
    <location>
        <position position="265"/>
    </location>
    <ligand>
        <name>Mg(2+)</name>
        <dbReference type="ChEBI" id="CHEBI:18420"/>
        <label>2</label>
    </ligand>
</feature>
<feature type="binding site" evidence="2">
    <location>
        <position position="267"/>
    </location>
    <ligand>
        <name>Mg(2+)</name>
        <dbReference type="ChEBI" id="CHEBI:18420"/>
        <label>2</label>
    </ligand>
</feature>
<dbReference type="EC" id="6.3.2.4" evidence="2"/>
<dbReference type="EMBL" id="CP000084">
    <property type="protein sequence ID" value="AAZ20846.1"/>
    <property type="molecule type" value="Genomic_DNA"/>
</dbReference>
<dbReference type="RefSeq" id="WP_011281416.1">
    <property type="nucleotide sequence ID" value="NC_007205.1"/>
</dbReference>
<dbReference type="SMR" id="Q4FPK8"/>
<dbReference type="STRING" id="335992.SAR11_0021"/>
<dbReference type="GeneID" id="66294524"/>
<dbReference type="KEGG" id="pub:SAR11_0021"/>
<dbReference type="eggNOG" id="COG1181">
    <property type="taxonomic scope" value="Bacteria"/>
</dbReference>
<dbReference type="HOGENOM" id="CLU_039268_1_1_5"/>
<dbReference type="OrthoDB" id="9813261at2"/>
<dbReference type="UniPathway" id="UPA00219"/>
<dbReference type="Proteomes" id="UP000002528">
    <property type="component" value="Chromosome"/>
</dbReference>
<dbReference type="GO" id="GO:0005737">
    <property type="term" value="C:cytoplasm"/>
    <property type="evidence" value="ECO:0007669"/>
    <property type="project" value="UniProtKB-SubCell"/>
</dbReference>
<dbReference type="GO" id="GO:0005524">
    <property type="term" value="F:ATP binding"/>
    <property type="evidence" value="ECO:0007669"/>
    <property type="project" value="UniProtKB-KW"/>
</dbReference>
<dbReference type="GO" id="GO:0008716">
    <property type="term" value="F:D-alanine-D-alanine ligase activity"/>
    <property type="evidence" value="ECO:0007669"/>
    <property type="project" value="UniProtKB-UniRule"/>
</dbReference>
<dbReference type="GO" id="GO:0046872">
    <property type="term" value="F:metal ion binding"/>
    <property type="evidence" value="ECO:0007669"/>
    <property type="project" value="UniProtKB-KW"/>
</dbReference>
<dbReference type="GO" id="GO:0071555">
    <property type="term" value="P:cell wall organization"/>
    <property type="evidence" value="ECO:0007669"/>
    <property type="project" value="UniProtKB-KW"/>
</dbReference>
<dbReference type="GO" id="GO:0009252">
    <property type="term" value="P:peptidoglycan biosynthetic process"/>
    <property type="evidence" value="ECO:0007669"/>
    <property type="project" value="UniProtKB-UniRule"/>
</dbReference>
<dbReference type="GO" id="GO:0008360">
    <property type="term" value="P:regulation of cell shape"/>
    <property type="evidence" value="ECO:0007669"/>
    <property type="project" value="UniProtKB-KW"/>
</dbReference>
<dbReference type="Gene3D" id="3.40.50.20">
    <property type="match status" value="1"/>
</dbReference>
<dbReference type="Gene3D" id="3.30.1490.20">
    <property type="entry name" value="ATP-grasp fold, A domain"/>
    <property type="match status" value="1"/>
</dbReference>
<dbReference type="Gene3D" id="3.30.470.20">
    <property type="entry name" value="ATP-grasp fold, B domain"/>
    <property type="match status" value="1"/>
</dbReference>
<dbReference type="HAMAP" id="MF_00047">
    <property type="entry name" value="Dala_Dala_lig"/>
    <property type="match status" value="1"/>
</dbReference>
<dbReference type="InterPro" id="IPR011761">
    <property type="entry name" value="ATP-grasp"/>
</dbReference>
<dbReference type="InterPro" id="IPR013815">
    <property type="entry name" value="ATP_grasp_subdomain_1"/>
</dbReference>
<dbReference type="InterPro" id="IPR000291">
    <property type="entry name" value="D-Ala_lig_Van_CS"/>
</dbReference>
<dbReference type="InterPro" id="IPR005905">
    <property type="entry name" value="D_ala_D_ala"/>
</dbReference>
<dbReference type="InterPro" id="IPR011095">
    <property type="entry name" value="Dala_Dala_lig_C"/>
</dbReference>
<dbReference type="InterPro" id="IPR011127">
    <property type="entry name" value="Dala_Dala_lig_N"/>
</dbReference>
<dbReference type="InterPro" id="IPR016185">
    <property type="entry name" value="PreATP-grasp_dom_sf"/>
</dbReference>
<dbReference type="NCBIfam" id="TIGR01205">
    <property type="entry name" value="D_ala_D_alaTIGR"/>
    <property type="match status" value="1"/>
</dbReference>
<dbReference type="NCBIfam" id="NF002378">
    <property type="entry name" value="PRK01372.1"/>
    <property type="match status" value="1"/>
</dbReference>
<dbReference type="PANTHER" id="PTHR23132">
    <property type="entry name" value="D-ALANINE--D-ALANINE LIGASE"/>
    <property type="match status" value="1"/>
</dbReference>
<dbReference type="PANTHER" id="PTHR23132:SF23">
    <property type="entry name" value="D-ALANINE--D-ALANINE LIGASE B"/>
    <property type="match status" value="1"/>
</dbReference>
<dbReference type="Pfam" id="PF07478">
    <property type="entry name" value="Dala_Dala_lig_C"/>
    <property type="match status" value="1"/>
</dbReference>
<dbReference type="Pfam" id="PF01820">
    <property type="entry name" value="Dala_Dala_lig_N"/>
    <property type="match status" value="1"/>
</dbReference>
<dbReference type="PIRSF" id="PIRSF039102">
    <property type="entry name" value="Ddl/VanB"/>
    <property type="match status" value="1"/>
</dbReference>
<dbReference type="SUPFAM" id="SSF56059">
    <property type="entry name" value="Glutathione synthetase ATP-binding domain-like"/>
    <property type="match status" value="1"/>
</dbReference>
<dbReference type="SUPFAM" id="SSF52440">
    <property type="entry name" value="PreATP-grasp domain"/>
    <property type="match status" value="1"/>
</dbReference>
<dbReference type="PROSITE" id="PS50975">
    <property type="entry name" value="ATP_GRASP"/>
    <property type="match status" value="1"/>
</dbReference>
<dbReference type="PROSITE" id="PS00843">
    <property type="entry name" value="DALA_DALA_LIGASE_1"/>
    <property type="match status" value="1"/>
</dbReference>
<evidence type="ECO:0000250" key="1"/>
<evidence type="ECO:0000255" key="2">
    <source>
        <dbReference type="HAMAP-Rule" id="MF_00047"/>
    </source>
</evidence>
<gene>
    <name evidence="2" type="primary">ddl</name>
    <name type="ordered locus">SAR11_0021</name>
</gene>
<accession>Q4FPK8</accession>
<proteinExistence type="inferred from homology"/>
<name>DDL_PELUB</name>
<keyword id="KW-0067">ATP-binding</keyword>
<keyword id="KW-0133">Cell shape</keyword>
<keyword id="KW-0961">Cell wall biogenesis/degradation</keyword>
<keyword id="KW-0963">Cytoplasm</keyword>
<keyword id="KW-0436">Ligase</keyword>
<keyword id="KW-0460">Magnesium</keyword>
<keyword id="KW-0464">Manganese</keyword>
<keyword id="KW-0479">Metal-binding</keyword>
<keyword id="KW-0547">Nucleotide-binding</keyword>
<keyword id="KW-0573">Peptidoglycan synthesis</keyword>
<keyword id="KW-1185">Reference proteome</keyword>